<comment type="function">
    <text evidence="1">IF-3 binds to the 30S ribosomal subunit and shifts the equilibrium between 70S ribosomes and their 50S and 30S subunits in favor of the free subunits, thus enhancing the availability of 30S subunits on which protein synthesis initiation begins.</text>
</comment>
<comment type="subunit">
    <text evidence="1">Monomer.</text>
</comment>
<comment type="subcellular location">
    <subcellularLocation>
        <location evidence="1">Cytoplasm</location>
    </subcellularLocation>
</comment>
<comment type="similarity">
    <text evidence="1">Belongs to the IF-3 family.</text>
</comment>
<evidence type="ECO:0000255" key="1">
    <source>
        <dbReference type="HAMAP-Rule" id="MF_00080"/>
    </source>
</evidence>
<proteinExistence type="inferred from homology"/>
<sequence length="173" mass="20010">MPAPQKDGPRANRDIRGVRDVQLIDQDGQNRGVVPFFDALAMAEEVGLDLVEIAPNSVPPVCKFLDYGRFRFNEQKKQNEARKRQKTVEVKEIKLRPGIDKHDYDVKMKAVQRFFEEGDKVKVTLRFRGREIAHQDIGLRLLERVKQETQEVAKVESEPMLEGRQMIMILAPR</sequence>
<dbReference type="EMBL" id="CP001029">
    <property type="protein sequence ID" value="ACB79776.1"/>
    <property type="molecule type" value="Genomic_DNA"/>
</dbReference>
<dbReference type="RefSeq" id="WP_012453523.1">
    <property type="nucleotide sequence ID" value="NC_010725.1"/>
</dbReference>
<dbReference type="SMR" id="B1ZGB8"/>
<dbReference type="STRING" id="441620.Mpop_1612"/>
<dbReference type="KEGG" id="mpo:Mpop_1612"/>
<dbReference type="eggNOG" id="COG0290">
    <property type="taxonomic scope" value="Bacteria"/>
</dbReference>
<dbReference type="HOGENOM" id="CLU_054919_3_2_5"/>
<dbReference type="Proteomes" id="UP000007136">
    <property type="component" value="Chromosome"/>
</dbReference>
<dbReference type="GO" id="GO:0005829">
    <property type="term" value="C:cytosol"/>
    <property type="evidence" value="ECO:0007669"/>
    <property type="project" value="TreeGrafter"/>
</dbReference>
<dbReference type="GO" id="GO:0016020">
    <property type="term" value="C:membrane"/>
    <property type="evidence" value="ECO:0007669"/>
    <property type="project" value="TreeGrafter"/>
</dbReference>
<dbReference type="GO" id="GO:0043022">
    <property type="term" value="F:ribosome binding"/>
    <property type="evidence" value="ECO:0007669"/>
    <property type="project" value="TreeGrafter"/>
</dbReference>
<dbReference type="GO" id="GO:0003743">
    <property type="term" value="F:translation initiation factor activity"/>
    <property type="evidence" value="ECO:0007669"/>
    <property type="project" value="UniProtKB-UniRule"/>
</dbReference>
<dbReference type="GO" id="GO:0032790">
    <property type="term" value="P:ribosome disassembly"/>
    <property type="evidence" value="ECO:0007669"/>
    <property type="project" value="TreeGrafter"/>
</dbReference>
<dbReference type="FunFam" id="3.30.110.10:FF:000001">
    <property type="entry name" value="Translation initiation factor IF-3"/>
    <property type="match status" value="1"/>
</dbReference>
<dbReference type="Gene3D" id="3.30.110.10">
    <property type="entry name" value="Translation initiation factor 3 (IF-3), C-terminal domain"/>
    <property type="match status" value="1"/>
</dbReference>
<dbReference type="Gene3D" id="3.10.20.80">
    <property type="entry name" value="Translation initiation factor 3 (IF-3), N-terminal domain"/>
    <property type="match status" value="1"/>
</dbReference>
<dbReference type="HAMAP" id="MF_00080">
    <property type="entry name" value="IF_3"/>
    <property type="match status" value="1"/>
</dbReference>
<dbReference type="InterPro" id="IPR036788">
    <property type="entry name" value="T_IF-3_C_sf"/>
</dbReference>
<dbReference type="InterPro" id="IPR036787">
    <property type="entry name" value="T_IF-3_N_sf"/>
</dbReference>
<dbReference type="InterPro" id="IPR001288">
    <property type="entry name" value="Translation_initiation_fac_3"/>
</dbReference>
<dbReference type="InterPro" id="IPR019815">
    <property type="entry name" value="Translation_initiation_fac_3_C"/>
</dbReference>
<dbReference type="InterPro" id="IPR019814">
    <property type="entry name" value="Translation_initiation_fac_3_N"/>
</dbReference>
<dbReference type="NCBIfam" id="TIGR00168">
    <property type="entry name" value="infC"/>
    <property type="match status" value="1"/>
</dbReference>
<dbReference type="PANTHER" id="PTHR10938">
    <property type="entry name" value="TRANSLATION INITIATION FACTOR IF-3"/>
    <property type="match status" value="1"/>
</dbReference>
<dbReference type="PANTHER" id="PTHR10938:SF0">
    <property type="entry name" value="TRANSLATION INITIATION FACTOR IF-3, MITOCHONDRIAL"/>
    <property type="match status" value="1"/>
</dbReference>
<dbReference type="Pfam" id="PF00707">
    <property type="entry name" value="IF3_C"/>
    <property type="match status" value="1"/>
</dbReference>
<dbReference type="Pfam" id="PF05198">
    <property type="entry name" value="IF3_N"/>
    <property type="match status" value="1"/>
</dbReference>
<dbReference type="SUPFAM" id="SSF55200">
    <property type="entry name" value="Translation initiation factor IF3, C-terminal domain"/>
    <property type="match status" value="1"/>
</dbReference>
<dbReference type="SUPFAM" id="SSF54364">
    <property type="entry name" value="Translation initiation factor IF3, N-terminal domain"/>
    <property type="match status" value="1"/>
</dbReference>
<name>IF3_METPB</name>
<keyword id="KW-0963">Cytoplasm</keyword>
<keyword id="KW-0396">Initiation factor</keyword>
<keyword id="KW-0648">Protein biosynthesis</keyword>
<reference key="1">
    <citation type="submission" date="2008-04" db="EMBL/GenBank/DDBJ databases">
        <title>Complete sequence of chromosome of Methylobacterium populi BJ001.</title>
        <authorList>
            <consortium name="US DOE Joint Genome Institute"/>
            <person name="Copeland A."/>
            <person name="Lucas S."/>
            <person name="Lapidus A."/>
            <person name="Glavina del Rio T."/>
            <person name="Dalin E."/>
            <person name="Tice H."/>
            <person name="Bruce D."/>
            <person name="Goodwin L."/>
            <person name="Pitluck S."/>
            <person name="Chertkov O."/>
            <person name="Brettin T."/>
            <person name="Detter J.C."/>
            <person name="Han C."/>
            <person name="Kuske C.R."/>
            <person name="Schmutz J."/>
            <person name="Larimer F."/>
            <person name="Land M."/>
            <person name="Hauser L."/>
            <person name="Kyrpides N."/>
            <person name="Mikhailova N."/>
            <person name="Marx C."/>
            <person name="Richardson P."/>
        </authorList>
    </citation>
    <scope>NUCLEOTIDE SEQUENCE [LARGE SCALE GENOMIC DNA]</scope>
    <source>
        <strain>ATCC BAA-705 / NCIMB 13946 / BJ001</strain>
    </source>
</reference>
<protein>
    <recommendedName>
        <fullName evidence="1">Translation initiation factor IF-3</fullName>
    </recommendedName>
</protein>
<gene>
    <name evidence="1" type="primary">infC</name>
    <name type="ordered locus">Mpop_1612</name>
</gene>
<feature type="chain" id="PRO_1000202542" description="Translation initiation factor IF-3">
    <location>
        <begin position="1"/>
        <end position="173"/>
    </location>
</feature>
<organism>
    <name type="scientific">Methylorubrum populi (strain ATCC BAA-705 / NCIMB 13946 / BJ001)</name>
    <name type="common">Methylobacterium populi</name>
    <dbReference type="NCBI Taxonomy" id="441620"/>
    <lineage>
        <taxon>Bacteria</taxon>
        <taxon>Pseudomonadati</taxon>
        <taxon>Pseudomonadota</taxon>
        <taxon>Alphaproteobacteria</taxon>
        <taxon>Hyphomicrobiales</taxon>
        <taxon>Methylobacteriaceae</taxon>
        <taxon>Methylorubrum</taxon>
    </lineage>
</organism>
<accession>B1ZGB8</accession>